<sequence>MAEEGDVDEADVFLAFAQGPSPPRGPVRRALDKAFFIFLALFLTLLMLEAAYKLLWLLLWAKLGDWLLGTPQKEEELEL</sequence>
<keyword id="KW-0472">Membrane</keyword>
<keyword id="KW-1185">Reference proteome</keyword>
<keyword id="KW-0812">Transmembrane</keyword>
<keyword id="KW-1133">Transmembrane helix</keyword>
<gene>
    <name evidence="3" type="primary">SMIM40</name>
</gene>
<proteinExistence type="evidence at protein level"/>
<accession>Q5STR5</accession>
<organism>
    <name type="scientific">Homo sapiens</name>
    <name type="common">Human</name>
    <dbReference type="NCBI Taxonomy" id="9606"/>
    <lineage>
        <taxon>Eukaryota</taxon>
        <taxon>Metazoa</taxon>
        <taxon>Chordata</taxon>
        <taxon>Craniata</taxon>
        <taxon>Vertebrata</taxon>
        <taxon>Euteleostomi</taxon>
        <taxon>Mammalia</taxon>
        <taxon>Eutheria</taxon>
        <taxon>Euarchontoglires</taxon>
        <taxon>Primates</taxon>
        <taxon>Haplorrhini</taxon>
        <taxon>Catarrhini</taxon>
        <taxon>Hominidae</taxon>
        <taxon>Homo</taxon>
    </lineage>
</organism>
<reference key="1">
    <citation type="journal article" date="2003" name="Nature">
        <title>The DNA sequence and analysis of human chromosome 6.</title>
        <authorList>
            <person name="Mungall A.J."/>
            <person name="Palmer S.A."/>
            <person name="Sims S.K."/>
            <person name="Edwards C.A."/>
            <person name="Ashurst J.L."/>
            <person name="Wilming L."/>
            <person name="Jones M.C."/>
            <person name="Horton R."/>
            <person name="Hunt S.E."/>
            <person name="Scott C.E."/>
            <person name="Gilbert J.G.R."/>
            <person name="Clamp M.E."/>
            <person name="Bethel G."/>
            <person name="Milne S."/>
            <person name="Ainscough R."/>
            <person name="Almeida J.P."/>
            <person name="Ambrose K.D."/>
            <person name="Andrews T.D."/>
            <person name="Ashwell R.I.S."/>
            <person name="Babbage A.K."/>
            <person name="Bagguley C.L."/>
            <person name="Bailey J."/>
            <person name="Banerjee R."/>
            <person name="Barker D.J."/>
            <person name="Barlow K.F."/>
            <person name="Bates K."/>
            <person name="Beare D.M."/>
            <person name="Beasley H."/>
            <person name="Beasley O."/>
            <person name="Bird C.P."/>
            <person name="Blakey S.E."/>
            <person name="Bray-Allen S."/>
            <person name="Brook J."/>
            <person name="Brown A.J."/>
            <person name="Brown J.Y."/>
            <person name="Burford D.C."/>
            <person name="Burrill W."/>
            <person name="Burton J."/>
            <person name="Carder C."/>
            <person name="Carter N.P."/>
            <person name="Chapman J.C."/>
            <person name="Clark S.Y."/>
            <person name="Clark G."/>
            <person name="Clee C.M."/>
            <person name="Clegg S."/>
            <person name="Cobley V."/>
            <person name="Collier R.E."/>
            <person name="Collins J.E."/>
            <person name="Colman L.K."/>
            <person name="Corby N.R."/>
            <person name="Coville G.J."/>
            <person name="Culley K.M."/>
            <person name="Dhami P."/>
            <person name="Davies J."/>
            <person name="Dunn M."/>
            <person name="Earthrowl M.E."/>
            <person name="Ellington A.E."/>
            <person name="Evans K.A."/>
            <person name="Faulkner L."/>
            <person name="Francis M.D."/>
            <person name="Frankish A."/>
            <person name="Frankland J."/>
            <person name="French L."/>
            <person name="Garner P."/>
            <person name="Garnett J."/>
            <person name="Ghori M.J."/>
            <person name="Gilby L.M."/>
            <person name="Gillson C.J."/>
            <person name="Glithero R.J."/>
            <person name="Grafham D.V."/>
            <person name="Grant M."/>
            <person name="Gribble S."/>
            <person name="Griffiths C."/>
            <person name="Griffiths M.N.D."/>
            <person name="Hall R."/>
            <person name="Halls K.S."/>
            <person name="Hammond S."/>
            <person name="Harley J.L."/>
            <person name="Hart E.A."/>
            <person name="Heath P.D."/>
            <person name="Heathcott R."/>
            <person name="Holmes S.J."/>
            <person name="Howden P.J."/>
            <person name="Howe K.L."/>
            <person name="Howell G.R."/>
            <person name="Huckle E."/>
            <person name="Humphray S.J."/>
            <person name="Humphries M.D."/>
            <person name="Hunt A.R."/>
            <person name="Johnson C.M."/>
            <person name="Joy A.A."/>
            <person name="Kay M."/>
            <person name="Keenan S.J."/>
            <person name="Kimberley A.M."/>
            <person name="King A."/>
            <person name="Laird G.K."/>
            <person name="Langford C."/>
            <person name="Lawlor S."/>
            <person name="Leongamornlert D.A."/>
            <person name="Leversha M."/>
            <person name="Lloyd C.R."/>
            <person name="Lloyd D.M."/>
            <person name="Loveland J.E."/>
            <person name="Lovell J."/>
            <person name="Martin S."/>
            <person name="Mashreghi-Mohammadi M."/>
            <person name="Maslen G.L."/>
            <person name="Matthews L."/>
            <person name="McCann O.T."/>
            <person name="McLaren S.J."/>
            <person name="McLay K."/>
            <person name="McMurray A."/>
            <person name="Moore M.J.F."/>
            <person name="Mullikin J.C."/>
            <person name="Niblett D."/>
            <person name="Nickerson T."/>
            <person name="Novik K.L."/>
            <person name="Oliver K."/>
            <person name="Overton-Larty E.K."/>
            <person name="Parker A."/>
            <person name="Patel R."/>
            <person name="Pearce A.V."/>
            <person name="Peck A.I."/>
            <person name="Phillimore B.J.C.T."/>
            <person name="Phillips S."/>
            <person name="Plumb R.W."/>
            <person name="Porter K.M."/>
            <person name="Ramsey Y."/>
            <person name="Ranby S.A."/>
            <person name="Rice C.M."/>
            <person name="Ross M.T."/>
            <person name="Searle S.M."/>
            <person name="Sehra H.K."/>
            <person name="Sheridan E."/>
            <person name="Skuce C.D."/>
            <person name="Smith S."/>
            <person name="Smith M."/>
            <person name="Spraggon L."/>
            <person name="Squares S.L."/>
            <person name="Steward C.A."/>
            <person name="Sycamore N."/>
            <person name="Tamlyn-Hall G."/>
            <person name="Tester J."/>
            <person name="Theaker A.J."/>
            <person name="Thomas D.W."/>
            <person name="Thorpe A."/>
            <person name="Tracey A."/>
            <person name="Tromans A."/>
            <person name="Tubby B."/>
            <person name="Wall M."/>
            <person name="Wallis J.M."/>
            <person name="West A.P."/>
            <person name="White S.S."/>
            <person name="Whitehead S.L."/>
            <person name="Whittaker H."/>
            <person name="Wild A."/>
            <person name="Willey D.J."/>
            <person name="Wilmer T.E."/>
            <person name="Wood J.M."/>
            <person name="Wray P.W."/>
            <person name="Wyatt J.C."/>
            <person name="Young L."/>
            <person name="Younger R.M."/>
            <person name="Bentley D.R."/>
            <person name="Coulson A."/>
            <person name="Durbin R.M."/>
            <person name="Hubbard T."/>
            <person name="Sulston J.E."/>
            <person name="Dunham I."/>
            <person name="Rogers J."/>
            <person name="Beck S."/>
        </authorList>
    </citation>
    <scope>NUCLEOTIDE SEQUENCE [LARGE SCALE GENOMIC DNA]</scope>
</reference>
<reference evidence="4" key="2">
    <citation type="journal article" date="2014" name="J. Proteomics">
        <title>An enzyme assisted RP-RPLC approach for in-depth analysis of human liver phosphoproteome.</title>
        <authorList>
            <person name="Bian Y."/>
            <person name="Song C."/>
            <person name="Cheng K."/>
            <person name="Dong M."/>
            <person name="Wang F."/>
            <person name="Huang J."/>
            <person name="Sun D."/>
            <person name="Wang L."/>
            <person name="Ye M."/>
            <person name="Zou H."/>
        </authorList>
    </citation>
    <scope>IDENTIFICATION BY MASS SPECTROMETRY [LARGE SCALE ANALYSIS]</scope>
</reference>
<evidence type="ECO:0000255" key="1"/>
<evidence type="ECO:0000305" key="2"/>
<evidence type="ECO:0000312" key="3">
    <source>
        <dbReference type="HGNC" id="HGNC:54073"/>
    </source>
</evidence>
<evidence type="ECO:0007744" key="4">
    <source>
    </source>
</evidence>
<name>SIM40_HUMAN</name>
<comment type="subcellular location">
    <subcellularLocation>
        <location evidence="1">Membrane</location>
        <topology evidence="1">Single-pass membrane protein</topology>
    </subcellularLocation>
</comment>
<feature type="chain" id="PRO_0000446325" description="Small integral membrane protein 40">
    <location>
        <begin position="1"/>
        <end position="79"/>
    </location>
</feature>
<feature type="transmembrane region" description="Helical" evidence="1">
    <location>
        <begin position="35"/>
        <end position="55"/>
    </location>
</feature>
<protein>
    <recommendedName>
        <fullName evidence="2">Small integral membrane protein 40</fullName>
    </recommendedName>
</protein>
<dbReference type="EMBL" id="AL662820">
    <property type="status" value="NOT_ANNOTATED_CDS"/>
    <property type="molecule type" value="Genomic_DNA"/>
</dbReference>
<dbReference type="CCDS" id="CCDS93891.1"/>
<dbReference type="RefSeq" id="NP_001356132.1">
    <property type="nucleotide sequence ID" value="NM_001369203.1"/>
</dbReference>
<dbReference type="SMR" id="Q5STR5"/>
<dbReference type="ProteomicsDB" id="63912"/>
<dbReference type="Ensembl" id="ENST00000494082.3">
    <property type="protein sequence ID" value="ENSP00000496397.1"/>
    <property type="gene ID" value="ENSG00000286920.2"/>
</dbReference>
<dbReference type="GeneID" id="113523636"/>
<dbReference type="MANE-Select" id="ENST00000494082.3">
    <property type="protein sequence ID" value="ENSP00000496397.1"/>
    <property type="RefSeq nucleotide sequence ID" value="NM_001369203.1"/>
    <property type="RefSeq protein sequence ID" value="NP_001356132.1"/>
</dbReference>
<dbReference type="UCSC" id="uc063nwr.1">
    <property type="organism name" value="human"/>
</dbReference>
<dbReference type="AGR" id="HGNC:54073"/>
<dbReference type="GeneCards" id="SMIM40"/>
<dbReference type="HGNC" id="HGNC:54073">
    <property type="gene designation" value="SMIM40"/>
</dbReference>
<dbReference type="HPA" id="ENSG00000286920">
    <property type="expression patterns" value="Tissue enriched (retina)"/>
</dbReference>
<dbReference type="neXtProt" id="NX_Q5STR5"/>
<dbReference type="VEuPathDB" id="HostDB:ENSG00000285064"/>
<dbReference type="GeneTree" id="ENSGT00920000150736"/>
<dbReference type="InParanoid" id="Q5STR5"/>
<dbReference type="OMA" id="WPIPWAN"/>
<dbReference type="PAN-GO" id="Q5STR5">
    <property type="GO annotations" value="0 GO annotations based on evolutionary models"/>
</dbReference>
<dbReference type="PRO" id="PR:Q5STR5"/>
<dbReference type="Proteomes" id="UP000005640">
    <property type="component" value="Chromosome 6"/>
</dbReference>
<dbReference type="Bgee" id="ENSG00000286920">
    <property type="expression patterns" value="Expressed in granulocyte and 10 other cell types or tissues"/>
</dbReference>
<dbReference type="GO" id="GO:0016020">
    <property type="term" value="C:membrane"/>
    <property type="evidence" value="ECO:0007669"/>
    <property type="project" value="UniProtKB-SubCell"/>
</dbReference>